<reference key="1">
    <citation type="journal article" date="2006" name="J. Bacteriol.">
        <title>Complete genome sequence of Yersinia pestis strains Antiqua and Nepal516: evidence of gene reduction in an emerging pathogen.</title>
        <authorList>
            <person name="Chain P.S.G."/>
            <person name="Hu P."/>
            <person name="Malfatti S.A."/>
            <person name="Radnedge L."/>
            <person name="Larimer F."/>
            <person name="Vergez L.M."/>
            <person name="Worsham P."/>
            <person name="Chu M.C."/>
            <person name="Andersen G.L."/>
        </authorList>
    </citation>
    <scope>NUCLEOTIDE SEQUENCE [LARGE SCALE GENOMIC DNA]</scope>
    <source>
        <strain>Antiqua</strain>
    </source>
</reference>
<sequence>MEQFEAISVEQAYLRWKEGKTALVDIRDPQSYEAGHAPGAFHLTNSSLHTFMQQTDFDQPVMVMCYHGNSSKGAAQYLLQQGFDVVYSIDGGFEAWARSYPQDITSESR</sequence>
<organism>
    <name type="scientific">Yersinia pestis bv. Antiqua (strain Antiqua)</name>
    <dbReference type="NCBI Taxonomy" id="360102"/>
    <lineage>
        <taxon>Bacteria</taxon>
        <taxon>Pseudomonadati</taxon>
        <taxon>Pseudomonadota</taxon>
        <taxon>Gammaproteobacteria</taxon>
        <taxon>Enterobacterales</taxon>
        <taxon>Yersiniaceae</taxon>
        <taxon>Yersinia</taxon>
    </lineage>
</organism>
<name>GLPE_YERPA</name>
<dbReference type="EC" id="2.8.1.1" evidence="1"/>
<dbReference type="EMBL" id="CP000308">
    <property type="protein sequence ID" value="ABG15309.1"/>
    <property type="molecule type" value="Genomic_DNA"/>
</dbReference>
<dbReference type="RefSeq" id="WP_002218928.1">
    <property type="nucleotide sequence ID" value="NZ_CP009906.1"/>
</dbReference>
<dbReference type="SMR" id="Q1C2L3"/>
<dbReference type="KEGG" id="ypa:YPA_3347"/>
<dbReference type="Proteomes" id="UP000001971">
    <property type="component" value="Chromosome"/>
</dbReference>
<dbReference type="GO" id="GO:0005737">
    <property type="term" value="C:cytoplasm"/>
    <property type="evidence" value="ECO:0007669"/>
    <property type="project" value="UniProtKB-SubCell"/>
</dbReference>
<dbReference type="GO" id="GO:0004792">
    <property type="term" value="F:thiosulfate-cyanide sulfurtransferase activity"/>
    <property type="evidence" value="ECO:0007669"/>
    <property type="project" value="UniProtKB-UniRule"/>
</dbReference>
<dbReference type="GO" id="GO:0006071">
    <property type="term" value="P:glycerol metabolic process"/>
    <property type="evidence" value="ECO:0007669"/>
    <property type="project" value="UniProtKB-UniRule"/>
</dbReference>
<dbReference type="CDD" id="cd01444">
    <property type="entry name" value="GlpE_ST"/>
    <property type="match status" value="1"/>
</dbReference>
<dbReference type="Gene3D" id="3.40.250.10">
    <property type="entry name" value="Rhodanese-like domain"/>
    <property type="match status" value="1"/>
</dbReference>
<dbReference type="HAMAP" id="MF_01009">
    <property type="entry name" value="Thiosulf_sulfurtr"/>
    <property type="match status" value="1"/>
</dbReference>
<dbReference type="InterPro" id="IPR050229">
    <property type="entry name" value="GlpE_sulfurtransferase"/>
</dbReference>
<dbReference type="InterPro" id="IPR001763">
    <property type="entry name" value="Rhodanese-like_dom"/>
</dbReference>
<dbReference type="InterPro" id="IPR036873">
    <property type="entry name" value="Rhodanese-like_dom_sf"/>
</dbReference>
<dbReference type="InterPro" id="IPR023695">
    <property type="entry name" value="Thiosulf_sulfurTrfase"/>
</dbReference>
<dbReference type="NCBIfam" id="NF001195">
    <property type="entry name" value="PRK00162.1"/>
    <property type="match status" value="1"/>
</dbReference>
<dbReference type="PANTHER" id="PTHR43031">
    <property type="entry name" value="FAD-DEPENDENT OXIDOREDUCTASE"/>
    <property type="match status" value="1"/>
</dbReference>
<dbReference type="PANTHER" id="PTHR43031:SF6">
    <property type="entry name" value="THIOSULFATE SULFURTRANSFERASE GLPE"/>
    <property type="match status" value="1"/>
</dbReference>
<dbReference type="Pfam" id="PF00581">
    <property type="entry name" value="Rhodanese"/>
    <property type="match status" value="1"/>
</dbReference>
<dbReference type="SMART" id="SM00450">
    <property type="entry name" value="RHOD"/>
    <property type="match status" value="1"/>
</dbReference>
<dbReference type="SUPFAM" id="SSF52821">
    <property type="entry name" value="Rhodanese/Cell cycle control phosphatase"/>
    <property type="match status" value="1"/>
</dbReference>
<dbReference type="PROSITE" id="PS50206">
    <property type="entry name" value="RHODANESE_3"/>
    <property type="match status" value="1"/>
</dbReference>
<evidence type="ECO:0000255" key="1">
    <source>
        <dbReference type="HAMAP-Rule" id="MF_01009"/>
    </source>
</evidence>
<proteinExistence type="inferred from homology"/>
<comment type="function">
    <text evidence="1">Transferase that catalyzes the transfer of sulfur from thiosulfate to thiophilic acceptors such as cyanide or dithiols. May function in a CysM-independent thiosulfate assimilation pathway by catalyzing the conversion of thiosulfate to sulfite, which can then be used for L-cysteine biosynthesis.</text>
</comment>
<comment type="catalytic activity">
    <reaction evidence="1">
        <text>thiosulfate + hydrogen cyanide = thiocyanate + sulfite + 2 H(+)</text>
        <dbReference type="Rhea" id="RHEA:16881"/>
        <dbReference type="ChEBI" id="CHEBI:15378"/>
        <dbReference type="ChEBI" id="CHEBI:17359"/>
        <dbReference type="ChEBI" id="CHEBI:18022"/>
        <dbReference type="ChEBI" id="CHEBI:18407"/>
        <dbReference type="ChEBI" id="CHEBI:33542"/>
        <dbReference type="EC" id="2.8.1.1"/>
    </reaction>
</comment>
<comment type="catalytic activity">
    <reaction evidence="1">
        <text>thiosulfate + [thioredoxin]-dithiol = [thioredoxin]-disulfide + hydrogen sulfide + sulfite + 2 H(+)</text>
        <dbReference type="Rhea" id="RHEA:83859"/>
        <dbReference type="Rhea" id="RHEA-COMP:10698"/>
        <dbReference type="Rhea" id="RHEA-COMP:10700"/>
        <dbReference type="ChEBI" id="CHEBI:15378"/>
        <dbReference type="ChEBI" id="CHEBI:17359"/>
        <dbReference type="ChEBI" id="CHEBI:29919"/>
        <dbReference type="ChEBI" id="CHEBI:29950"/>
        <dbReference type="ChEBI" id="CHEBI:33542"/>
        <dbReference type="ChEBI" id="CHEBI:50058"/>
    </reaction>
</comment>
<comment type="subcellular location">
    <subcellularLocation>
        <location evidence="1">Cytoplasm</location>
    </subcellularLocation>
</comment>
<comment type="similarity">
    <text evidence="1">Belongs to the GlpE family.</text>
</comment>
<feature type="chain" id="PRO_1000062985" description="Thiosulfate sulfurtransferase GlpE">
    <location>
        <begin position="1"/>
        <end position="109"/>
    </location>
</feature>
<feature type="domain" description="Rhodanese" evidence="1">
    <location>
        <begin position="17"/>
        <end position="105"/>
    </location>
</feature>
<feature type="active site" description="Cysteine persulfide intermediate" evidence="1">
    <location>
        <position position="65"/>
    </location>
</feature>
<gene>
    <name evidence="1" type="primary">glpE</name>
    <name type="ordered locus">YPA_3347</name>
</gene>
<protein>
    <recommendedName>
        <fullName evidence="1">Thiosulfate sulfurtransferase GlpE</fullName>
        <ecNumber evidence="1">2.8.1.1</ecNumber>
    </recommendedName>
</protein>
<keyword id="KW-0963">Cytoplasm</keyword>
<keyword id="KW-0808">Transferase</keyword>
<accession>Q1C2L3</accession>